<proteinExistence type="inferred from homology"/>
<feature type="chain" id="PRO_0000155872" description="Ribonuclease Z">
    <location>
        <begin position="1"/>
        <end position="311"/>
    </location>
</feature>
<feature type="active site" description="Proton acceptor" evidence="1">
    <location>
        <position position="67"/>
    </location>
</feature>
<feature type="binding site" evidence="1">
    <location>
        <position position="63"/>
    </location>
    <ligand>
        <name>Zn(2+)</name>
        <dbReference type="ChEBI" id="CHEBI:29105"/>
        <label>1</label>
        <note>catalytic</note>
    </ligand>
</feature>
<feature type="binding site" evidence="1">
    <location>
        <position position="65"/>
    </location>
    <ligand>
        <name>Zn(2+)</name>
        <dbReference type="ChEBI" id="CHEBI:29105"/>
        <label>1</label>
        <note>catalytic</note>
    </ligand>
</feature>
<feature type="binding site" evidence="1">
    <location>
        <position position="67"/>
    </location>
    <ligand>
        <name>Zn(2+)</name>
        <dbReference type="ChEBI" id="CHEBI:29105"/>
        <label>2</label>
        <note>catalytic</note>
    </ligand>
</feature>
<feature type="binding site" evidence="1">
    <location>
        <position position="68"/>
    </location>
    <ligand>
        <name>Zn(2+)</name>
        <dbReference type="ChEBI" id="CHEBI:29105"/>
        <label>2</label>
        <note>catalytic</note>
    </ligand>
</feature>
<feature type="binding site" evidence="1">
    <location>
        <position position="141"/>
    </location>
    <ligand>
        <name>Zn(2+)</name>
        <dbReference type="ChEBI" id="CHEBI:29105"/>
        <label>1</label>
        <note>catalytic</note>
    </ligand>
</feature>
<feature type="binding site" evidence="1">
    <location>
        <position position="212"/>
    </location>
    <ligand>
        <name>Zn(2+)</name>
        <dbReference type="ChEBI" id="CHEBI:29105"/>
        <label>1</label>
        <note>catalytic</note>
    </ligand>
</feature>
<feature type="binding site" evidence="1">
    <location>
        <position position="212"/>
    </location>
    <ligand>
        <name>Zn(2+)</name>
        <dbReference type="ChEBI" id="CHEBI:29105"/>
        <label>2</label>
        <note>catalytic</note>
    </ligand>
</feature>
<feature type="binding site" evidence="1">
    <location>
        <position position="270"/>
    </location>
    <ligand>
        <name>Zn(2+)</name>
        <dbReference type="ChEBI" id="CHEBI:29105"/>
        <label>2</label>
        <note>catalytic</note>
    </ligand>
</feature>
<reference key="1">
    <citation type="journal article" date="2003" name="Proc. Natl. Acad. Sci. U.S.A.">
        <title>Complete genome sequence of Lactobacillus plantarum WCFS1.</title>
        <authorList>
            <person name="Kleerebezem M."/>
            <person name="Boekhorst J."/>
            <person name="van Kranenburg R."/>
            <person name="Molenaar D."/>
            <person name="Kuipers O.P."/>
            <person name="Leer R."/>
            <person name="Tarchini R."/>
            <person name="Peters S.A."/>
            <person name="Sandbrink H.M."/>
            <person name="Fiers M.W.E.J."/>
            <person name="Stiekema W."/>
            <person name="Klein Lankhorst R.M."/>
            <person name="Bron P.A."/>
            <person name="Hoffer S.M."/>
            <person name="Nierop Groot M.N."/>
            <person name="Kerkhoven R."/>
            <person name="De Vries M."/>
            <person name="Ursing B."/>
            <person name="De Vos W.M."/>
            <person name="Siezen R.J."/>
        </authorList>
    </citation>
    <scope>NUCLEOTIDE SEQUENCE [LARGE SCALE GENOMIC DNA]</scope>
    <source>
        <strain>ATCC BAA-793 / NCIMB 8826 / WCFS1</strain>
    </source>
</reference>
<reference key="2">
    <citation type="journal article" date="2012" name="J. Bacteriol.">
        <title>Complete resequencing and reannotation of the Lactobacillus plantarum WCFS1 genome.</title>
        <authorList>
            <person name="Siezen R.J."/>
            <person name="Francke C."/>
            <person name="Renckens B."/>
            <person name="Boekhorst J."/>
            <person name="Wels M."/>
            <person name="Kleerebezem M."/>
            <person name="van Hijum S.A."/>
        </authorList>
    </citation>
    <scope>NUCLEOTIDE SEQUENCE [LARGE SCALE GENOMIC DNA]</scope>
    <scope>GENOME REANNOTATION</scope>
    <source>
        <strain>ATCC BAA-793 / NCIMB 8826 / WCFS1</strain>
    </source>
</reference>
<sequence>MQLEFLGTGAGSPGKFRNVTSTALRLLDERNEVWLFDVGEGTQHQILRTTLKPRKIAKIFITHLHGDHIFGLPGLLSSRSFQGGDEPLTIYGPVGVRDFVQTALRVSGTHLSYPLKFHEITKAETVFEDATFKVSCEPLDHRIACFGYRVEEADHPGELQADRLKALNIPSGPVYGQLKAGKTVTLPDGRTINGQDYIAAPQKGRTVTILGDTRRTPHAVSLAQDADALVHESTFGKDEGKLAHNYYHSTSTQAAQVAQQAGVKQLLLTHISARYTGKLSKELQKQAQKVFSHSKVVRDFDVIDIPLPEKG</sequence>
<dbReference type="EC" id="3.1.26.11" evidence="1"/>
<dbReference type="EMBL" id="AL935263">
    <property type="protein sequence ID" value="CCC79328.1"/>
    <property type="molecule type" value="Genomic_DNA"/>
</dbReference>
<dbReference type="RefSeq" id="WP_003640772.1">
    <property type="nucleotide sequence ID" value="NC_004567.2"/>
</dbReference>
<dbReference type="RefSeq" id="YP_004889842.1">
    <property type="nucleotide sequence ID" value="NC_004567.2"/>
</dbReference>
<dbReference type="SMR" id="Q88VG6"/>
<dbReference type="STRING" id="220668.lp_2090"/>
<dbReference type="EnsemblBacteria" id="CCC79328">
    <property type="protein sequence ID" value="CCC79328"/>
    <property type="gene ID" value="lp_2090"/>
</dbReference>
<dbReference type="GeneID" id="77215485"/>
<dbReference type="KEGG" id="lpl:lp_2090"/>
<dbReference type="PATRIC" id="fig|220668.9.peg.1769"/>
<dbReference type="eggNOG" id="COG1234">
    <property type="taxonomic scope" value="Bacteria"/>
</dbReference>
<dbReference type="HOGENOM" id="CLU_031317_2_0_9"/>
<dbReference type="OrthoDB" id="9800940at2"/>
<dbReference type="PhylomeDB" id="Q88VG6"/>
<dbReference type="Proteomes" id="UP000000432">
    <property type="component" value="Chromosome"/>
</dbReference>
<dbReference type="GO" id="GO:0042781">
    <property type="term" value="F:3'-tRNA processing endoribonuclease activity"/>
    <property type="evidence" value="ECO:0007669"/>
    <property type="project" value="UniProtKB-UniRule"/>
</dbReference>
<dbReference type="GO" id="GO:0008270">
    <property type="term" value="F:zinc ion binding"/>
    <property type="evidence" value="ECO:0007669"/>
    <property type="project" value="UniProtKB-UniRule"/>
</dbReference>
<dbReference type="CDD" id="cd07717">
    <property type="entry name" value="RNaseZ_ZiPD-like_MBL-fold"/>
    <property type="match status" value="1"/>
</dbReference>
<dbReference type="FunFam" id="3.60.15.10:FF:000002">
    <property type="entry name" value="Ribonuclease Z"/>
    <property type="match status" value="1"/>
</dbReference>
<dbReference type="Gene3D" id="3.60.15.10">
    <property type="entry name" value="Ribonuclease Z/Hydroxyacylglutathione hydrolase-like"/>
    <property type="match status" value="1"/>
</dbReference>
<dbReference type="HAMAP" id="MF_01818">
    <property type="entry name" value="RNase_Z_BN"/>
    <property type="match status" value="1"/>
</dbReference>
<dbReference type="InterPro" id="IPR001279">
    <property type="entry name" value="Metallo-B-lactamas"/>
</dbReference>
<dbReference type="InterPro" id="IPR036866">
    <property type="entry name" value="RibonucZ/Hydroxyglut_hydro"/>
</dbReference>
<dbReference type="InterPro" id="IPR013471">
    <property type="entry name" value="RNase_Z/BN"/>
</dbReference>
<dbReference type="NCBIfam" id="NF000801">
    <property type="entry name" value="PRK00055.1-3"/>
    <property type="match status" value="1"/>
</dbReference>
<dbReference type="NCBIfam" id="TIGR02651">
    <property type="entry name" value="RNase_Z"/>
    <property type="match status" value="1"/>
</dbReference>
<dbReference type="PANTHER" id="PTHR46018">
    <property type="entry name" value="ZINC PHOSPHODIESTERASE ELAC PROTEIN 1"/>
    <property type="match status" value="1"/>
</dbReference>
<dbReference type="PANTHER" id="PTHR46018:SF2">
    <property type="entry name" value="ZINC PHOSPHODIESTERASE ELAC PROTEIN 1"/>
    <property type="match status" value="1"/>
</dbReference>
<dbReference type="Pfam" id="PF00753">
    <property type="entry name" value="Lactamase_B"/>
    <property type="match status" value="1"/>
</dbReference>
<dbReference type="SUPFAM" id="SSF56281">
    <property type="entry name" value="Metallo-hydrolase/oxidoreductase"/>
    <property type="match status" value="1"/>
</dbReference>
<comment type="function">
    <text evidence="1">Zinc phosphodiesterase, which displays some tRNA 3'-processing endonuclease activity. Probably involved in tRNA maturation, by removing a 3'-trailer from precursor tRNA.</text>
</comment>
<comment type="catalytic activity">
    <reaction evidence="1">
        <text>Endonucleolytic cleavage of RNA, removing extra 3' nucleotides from tRNA precursor, generating 3' termini of tRNAs. A 3'-hydroxy group is left at the tRNA terminus and a 5'-phosphoryl group is left at the trailer molecule.</text>
        <dbReference type="EC" id="3.1.26.11"/>
    </reaction>
</comment>
<comment type="cofactor">
    <cofactor evidence="1">
        <name>Zn(2+)</name>
        <dbReference type="ChEBI" id="CHEBI:29105"/>
    </cofactor>
    <text evidence="1">Binds 2 Zn(2+) ions.</text>
</comment>
<comment type="subunit">
    <text evidence="1">Homodimer.</text>
</comment>
<comment type="similarity">
    <text evidence="1">Belongs to the RNase Z family.</text>
</comment>
<keyword id="KW-0255">Endonuclease</keyword>
<keyword id="KW-0378">Hydrolase</keyword>
<keyword id="KW-0479">Metal-binding</keyword>
<keyword id="KW-0540">Nuclease</keyword>
<keyword id="KW-1185">Reference proteome</keyword>
<keyword id="KW-0819">tRNA processing</keyword>
<keyword id="KW-0862">Zinc</keyword>
<organism>
    <name type="scientific">Lactiplantibacillus plantarum (strain ATCC BAA-793 / NCIMB 8826 / WCFS1)</name>
    <name type="common">Lactobacillus plantarum</name>
    <dbReference type="NCBI Taxonomy" id="220668"/>
    <lineage>
        <taxon>Bacteria</taxon>
        <taxon>Bacillati</taxon>
        <taxon>Bacillota</taxon>
        <taxon>Bacilli</taxon>
        <taxon>Lactobacillales</taxon>
        <taxon>Lactobacillaceae</taxon>
        <taxon>Lactiplantibacillus</taxon>
    </lineage>
</organism>
<accession>Q88VG6</accession>
<accession>F9UQ39</accession>
<evidence type="ECO:0000255" key="1">
    <source>
        <dbReference type="HAMAP-Rule" id="MF_01818"/>
    </source>
</evidence>
<name>RNZ_LACPL</name>
<gene>
    <name evidence="1" type="primary">rnz</name>
    <name type="ordered locus">lp_2090</name>
</gene>
<protein>
    <recommendedName>
        <fullName evidence="1">Ribonuclease Z</fullName>
        <shortName evidence="1">RNase Z</shortName>
        <ecNumber evidence="1">3.1.26.11</ecNumber>
    </recommendedName>
    <alternativeName>
        <fullName evidence="1">tRNA 3 endonuclease</fullName>
    </alternativeName>
    <alternativeName>
        <fullName evidence="1">tRNase Z</fullName>
    </alternativeName>
</protein>